<proteinExistence type="inferred from homology"/>
<name>RL17_SHEB2</name>
<protein>
    <recommendedName>
        <fullName evidence="1">Large ribosomal subunit protein bL17</fullName>
    </recommendedName>
    <alternativeName>
        <fullName evidence="2">50S ribosomal protein L17</fullName>
    </alternativeName>
</protein>
<sequence length="131" mass="14684">MRHRKSGRQLNRNSSHRQAMFRNMAGSLVRHEIIKTTVAKAKELRRVVEPLITLAKSDSVANRRLAFARTRDAEVVGKLFTELGPRYQERPGGYTRILKCGLRAGDKAPMAYIELVGRPEAAQAVDVEAAE</sequence>
<gene>
    <name evidence="1" type="primary">rplQ</name>
    <name type="ordered locus">Sbal223_4030</name>
</gene>
<keyword id="KW-0687">Ribonucleoprotein</keyword>
<keyword id="KW-0689">Ribosomal protein</keyword>
<accession>B8EBH9</accession>
<reference key="1">
    <citation type="submission" date="2008-12" db="EMBL/GenBank/DDBJ databases">
        <title>Complete sequence of chromosome of Shewanella baltica OS223.</title>
        <authorList>
            <consortium name="US DOE Joint Genome Institute"/>
            <person name="Lucas S."/>
            <person name="Copeland A."/>
            <person name="Lapidus A."/>
            <person name="Glavina del Rio T."/>
            <person name="Dalin E."/>
            <person name="Tice H."/>
            <person name="Bruce D."/>
            <person name="Goodwin L."/>
            <person name="Pitluck S."/>
            <person name="Chertkov O."/>
            <person name="Meincke L."/>
            <person name="Brettin T."/>
            <person name="Detter J.C."/>
            <person name="Han C."/>
            <person name="Kuske C.R."/>
            <person name="Larimer F."/>
            <person name="Land M."/>
            <person name="Hauser L."/>
            <person name="Kyrpides N."/>
            <person name="Ovchinnikova G."/>
            <person name="Brettar I."/>
            <person name="Rodrigues J."/>
            <person name="Konstantinidis K."/>
            <person name="Tiedje J."/>
        </authorList>
    </citation>
    <scope>NUCLEOTIDE SEQUENCE [LARGE SCALE GENOMIC DNA]</scope>
    <source>
        <strain>OS223</strain>
    </source>
</reference>
<comment type="subunit">
    <text evidence="1">Part of the 50S ribosomal subunit. Contacts protein L32.</text>
</comment>
<comment type="similarity">
    <text evidence="1">Belongs to the bacterial ribosomal protein bL17 family.</text>
</comment>
<feature type="chain" id="PRO_1000184042" description="Large ribosomal subunit protein bL17">
    <location>
        <begin position="1"/>
        <end position="131"/>
    </location>
</feature>
<evidence type="ECO:0000255" key="1">
    <source>
        <dbReference type="HAMAP-Rule" id="MF_01368"/>
    </source>
</evidence>
<evidence type="ECO:0000305" key="2"/>
<dbReference type="EMBL" id="CP001252">
    <property type="protein sequence ID" value="ACK48503.1"/>
    <property type="molecule type" value="Genomic_DNA"/>
</dbReference>
<dbReference type="RefSeq" id="WP_006083573.1">
    <property type="nucleotide sequence ID" value="NC_011663.1"/>
</dbReference>
<dbReference type="SMR" id="B8EBH9"/>
<dbReference type="GeneID" id="11770581"/>
<dbReference type="KEGG" id="sbp:Sbal223_4030"/>
<dbReference type="HOGENOM" id="CLU_074407_2_0_6"/>
<dbReference type="Proteomes" id="UP000002507">
    <property type="component" value="Chromosome"/>
</dbReference>
<dbReference type="GO" id="GO:0022625">
    <property type="term" value="C:cytosolic large ribosomal subunit"/>
    <property type="evidence" value="ECO:0007669"/>
    <property type="project" value="TreeGrafter"/>
</dbReference>
<dbReference type="GO" id="GO:0003735">
    <property type="term" value="F:structural constituent of ribosome"/>
    <property type="evidence" value="ECO:0007669"/>
    <property type="project" value="InterPro"/>
</dbReference>
<dbReference type="GO" id="GO:0006412">
    <property type="term" value="P:translation"/>
    <property type="evidence" value="ECO:0007669"/>
    <property type="project" value="UniProtKB-UniRule"/>
</dbReference>
<dbReference type="FunFam" id="3.90.1030.10:FF:000001">
    <property type="entry name" value="50S ribosomal protein L17"/>
    <property type="match status" value="1"/>
</dbReference>
<dbReference type="Gene3D" id="3.90.1030.10">
    <property type="entry name" value="Ribosomal protein L17"/>
    <property type="match status" value="1"/>
</dbReference>
<dbReference type="HAMAP" id="MF_01368">
    <property type="entry name" value="Ribosomal_bL17"/>
    <property type="match status" value="1"/>
</dbReference>
<dbReference type="InterPro" id="IPR000456">
    <property type="entry name" value="Ribosomal_bL17"/>
</dbReference>
<dbReference type="InterPro" id="IPR047859">
    <property type="entry name" value="Ribosomal_bL17_CS"/>
</dbReference>
<dbReference type="InterPro" id="IPR036373">
    <property type="entry name" value="Ribosomal_bL17_sf"/>
</dbReference>
<dbReference type="NCBIfam" id="TIGR00059">
    <property type="entry name" value="L17"/>
    <property type="match status" value="1"/>
</dbReference>
<dbReference type="PANTHER" id="PTHR14413:SF16">
    <property type="entry name" value="LARGE RIBOSOMAL SUBUNIT PROTEIN BL17M"/>
    <property type="match status" value="1"/>
</dbReference>
<dbReference type="PANTHER" id="PTHR14413">
    <property type="entry name" value="RIBOSOMAL PROTEIN L17"/>
    <property type="match status" value="1"/>
</dbReference>
<dbReference type="Pfam" id="PF01196">
    <property type="entry name" value="Ribosomal_L17"/>
    <property type="match status" value="1"/>
</dbReference>
<dbReference type="SUPFAM" id="SSF64263">
    <property type="entry name" value="Prokaryotic ribosomal protein L17"/>
    <property type="match status" value="1"/>
</dbReference>
<dbReference type="PROSITE" id="PS01167">
    <property type="entry name" value="RIBOSOMAL_L17"/>
    <property type="match status" value="1"/>
</dbReference>
<organism>
    <name type="scientific">Shewanella baltica (strain OS223)</name>
    <dbReference type="NCBI Taxonomy" id="407976"/>
    <lineage>
        <taxon>Bacteria</taxon>
        <taxon>Pseudomonadati</taxon>
        <taxon>Pseudomonadota</taxon>
        <taxon>Gammaproteobacteria</taxon>
        <taxon>Alteromonadales</taxon>
        <taxon>Shewanellaceae</taxon>
        <taxon>Shewanella</taxon>
    </lineage>
</organism>